<name>SYC_PSELT</name>
<evidence type="ECO:0000255" key="1">
    <source>
        <dbReference type="HAMAP-Rule" id="MF_00041"/>
    </source>
</evidence>
<protein>
    <recommendedName>
        <fullName evidence="1">Cysteine--tRNA ligase</fullName>
        <ecNumber evidence="1">6.1.1.16</ecNumber>
    </recommendedName>
    <alternativeName>
        <fullName evidence="1">Cysteinyl-tRNA synthetase</fullName>
        <shortName evidence="1">CysRS</shortName>
    </alternativeName>
</protein>
<proteinExistence type="inferred from homology"/>
<keyword id="KW-0030">Aminoacyl-tRNA synthetase</keyword>
<keyword id="KW-0067">ATP-binding</keyword>
<keyword id="KW-0963">Cytoplasm</keyword>
<keyword id="KW-0436">Ligase</keyword>
<keyword id="KW-0479">Metal-binding</keyword>
<keyword id="KW-0547">Nucleotide-binding</keyword>
<keyword id="KW-0648">Protein biosynthesis</keyword>
<keyword id="KW-1185">Reference proteome</keyword>
<keyword id="KW-0862">Zinc</keyword>
<gene>
    <name evidence="1" type="primary">cysS</name>
    <name type="ordered locus">Tlet_0764</name>
</gene>
<feature type="chain" id="PRO_1000090879" description="Cysteine--tRNA ligase">
    <location>
        <begin position="1"/>
        <end position="463"/>
    </location>
</feature>
<feature type="short sequence motif" description="'HIGH' region">
    <location>
        <begin position="29"/>
        <end position="39"/>
    </location>
</feature>
<feature type="short sequence motif" description="'KMSKS' region">
    <location>
        <begin position="264"/>
        <end position="268"/>
    </location>
</feature>
<feature type="binding site" evidence="1">
    <location>
        <position position="27"/>
    </location>
    <ligand>
        <name>Zn(2+)</name>
        <dbReference type="ChEBI" id="CHEBI:29105"/>
    </ligand>
</feature>
<feature type="binding site" evidence="1">
    <location>
        <position position="207"/>
    </location>
    <ligand>
        <name>Zn(2+)</name>
        <dbReference type="ChEBI" id="CHEBI:29105"/>
    </ligand>
</feature>
<feature type="binding site" evidence="1">
    <location>
        <position position="232"/>
    </location>
    <ligand>
        <name>Zn(2+)</name>
        <dbReference type="ChEBI" id="CHEBI:29105"/>
    </ligand>
</feature>
<feature type="binding site" evidence="1">
    <location>
        <position position="236"/>
    </location>
    <ligand>
        <name>Zn(2+)</name>
        <dbReference type="ChEBI" id="CHEBI:29105"/>
    </ligand>
</feature>
<feature type="binding site" evidence="1">
    <location>
        <position position="267"/>
    </location>
    <ligand>
        <name>ATP</name>
        <dbReference type="ChEBI" id="CHEBI:30616"/>
    </ligand>
</feature>
<accession>A8F596</accession>
<comment type="catalytic activity">
    <reaction evidence="1">
        <text>tRNA(Cys) + L-cysteine + ATP = L-cysteinyl-tRNA(Cys) + AMP + diphosphate</text>
        <dbReference type="Rhea" id="RHEA:17773"/>
        <dbReference type="Rhea" id="RHEA-COMP:9661"/>
        <dbReference type="Rhea" id="RHEA-COMP:9679"/>
        <dbReference type="ChEBI" id="CHEBI:30616"/>
        <dbReference type="ChEBI" id="CHEBI:33019"/>
        <dbReference type="ChEBI" id="CHEBI:35235"/>
        <dbReference type="ChEBI" id="CHEBI:78442"/>
        <dbReference type="ChEBI" id="CHEBI:78517"/>
        <dbReference type="ChEBI" id="CHEBI:456215"/>
        <dbReference type="EC" id="6.1.1.16"/>
    </reaction>
</comment>
<comment type="cofactor">
    <cofactor evidence="1">
        <name>Zn(2+)</name>
        <dbReference type="ChEBI" id="CHEBI:29105"/>
    </cofactor>
    <text evidence="1">Binds 1 zinc ion per subunit.</text>
</comment>
<comment type="subunit">
    <text evidence="1">Monomer.</text>
</comment>
<comment type="subcellular location">
    <subcellularLocation>
        <location evidence="1">Cytoplasm</location>
    </subcellularLocation>
</comment>
<comment type="similarity">
    <text evidence="1">Belongs to the class-I aminoacyl-tRNA synthetase family.</text>
</comment>
<reference key="1">
    <citation type="submission" date="2007-08" db="EMBL/GenBank/DDBJ databases">
        <title>Complete sequence of Thermotoga lettingae TMO.</title>
        <authorList>
            <consortium name="US DOE Joint Genome Institute"/>
            <person name="Copeland A."/>
            <person name="Lucas S."/>
            <person name="Lapidus A."/>
            <person name="Barry K."/>
            <person name="Glavina del Rio T."/>
            <person name="Dalin E."/>
            <person name="Tice H."/>
            <person name="Pitluck S."/>
            <person name="Foster B."/>
            <person name="Bruce D."/>
            <person name="Schmutz J."/>
            <person name="Larimer F."/>
            <person name="Land M."/>
            <person name="Hauser L."/>
            <person name="Kyrpides N."/>
            <person name="Mikhailova N."/>
            <person name="Nelson K."/>
            <person name="Gogarten J.P."/>
            <person name="Noll K."/>
            <person name="Richardson P."/>
        </authorList>
    </citation>
    <scope>NUCLEOTIDE SEQUENCE [LARGE SCALE GENOMIC DNA]</scope>
    <source>
        <strain>ATCC BAA-301 / DSM 14385 / NBRC 107922 / TMO</strain>
    </source>
</reference>
<organism>
    <name type="scientific">Pseudothermotoga lettingae (strain ATCC BAA-301 / DSM 14385 / NBRC 107922 / TMO)</name>
    <name type="common">Thermotoga lettingae</name>
    <dbReference type="NCBI Taxonomy" id="416591"/>
    <lineage>
        <taxon>Bacteria</taxon>
        <taxon>Thermotogati</taxon>
        <taxon>Thermotogota</taxon>
        <taxon>Thermotogae</taxon>
        <taxon>Thermotogales</taxon>
        <taxon>Thermotogaceae</taxon>
        <taxon>Pseudothermotoga</taxon>
    </lineage>
</organism>
<dbReference type="EC" id="6.1.1.16" evidence="1"/>
<dbReference type="EMBL" id="CP000812">
    <property type="protein sequence ID" value="ABV33330.1"/>
    <property type="molecule type" value="Genomic_DNA"/>
</dbReference>
<dbReference type="RefSeq" id="WP_012002811.1">
    <property type="nucleotide sequence ID" value="NZ_BSDV01000001.1"/>
</dbReference>
<dbReference type="SMR" id="A8F596"/>
<dbReference type="STRING" id="416591.Tlet_0764"/>
<dbReference type="KEGG" id="tle:Tlet_0764"/>
<dbReference type="eggNOG" id="COG0215">
    <property type="taxonomic scope" value="Bacteria"/>
</dbReference>
<dbReference type="HOGENOM" id="CLU_013528_0_1_0"/>
<dbReference type="OrthoDB" id="9815130at2"/>
<dbReference type="Proteomes" id="UP000002016">
    <property type="component" value="Chromosome"/>
</dbReference>
<dbReference type="GO" id="GO:0005829">
    <property type="term" value="C:cytosol"/>
    <property type="evidence" value="ECO:0007669"/>
    <property type="project" value="TreeGrafter"/>
</dbReference>
<dbReference type="GO" id="GO:0005524">
    <property type="term" value="F:ATP binding"/>
    <property type="evidence" value="ECO:0007669"/>
    <property type="project" value="UniProtKB-UniRule"/>
</dbReference>
<dbReference type="GO" id="GO:0004817">
    <property type="term" value="F:cysteine-tRNA ligase activity"/>
    <property type="evidence" value="ECO:0007669"/>
    <property type="project" value="UniProtKB-UniRule"/>
</dbReference>
<dbReference type="GO" id="GO:0008270">
    <property type="term" value="F:zinc ion binding"/>
    <property type="evidence" value="ECO:0007669"/>
    <property type="project" value="UniProtKB-UniRule"/>
</dbReference>
<dbReference type="GO" id="GO:0006423">
    <property type="term" value="P:cysteinyl-tRNA aminoacylation"/>
    <property type="evidence" value="ECO:0007669"/>
    <property type="project" value="UniProtKB-UniRule"/>
</dbReference>
<dbReference type="CDD" id="cd00672">
    <property type="entry name" value="CysRS_core"/>
    <property type="match status" value="1"/>
</dbReference>
<dbReference type="FunFam" id="3.40.50.620:FF:000009">
    <property type="entry name" value="Cysteine--tRNA ligase"/>
    <property type="match status" value="1"/>
</dbReference>
<dbReference type="Gene3D" id="1.20.120.1910">
    <property type="entry name" value="Cysteine-tRNA ligase, C-terminal anti-codon recognition domain"/>
    <property type="match status" value="1"/>
</dbReference>
<dbReference type="Gene3D" id="3.40.50.620">
    <property type="entry name" value="HUPs"/>
    <property type="match status" value="1"/>
</dbReference>
<dbReference type="HAMAP" id="MF_00041">
    <property type="entry name" value="Cys_tRNA_synth"/>
    <property type="match status" value="1"/>
</dbReference>
<dbReference type="InterPro" id="IPR015803">
    <property type="entry name" value="Cys-tRNA-ligase"/>
</dbReference>
<dbReference type="InterPro" id="IPR015273">
    <property type="entry name" value="Cys-tRNA-synt_Ia_DALR"/>
</dbReference>
<dbReference type="InterPro" id="IPR024909">
    <property type="entry name" value="Cys-tRNA/MSH_ligase"/>
</dbReference>
<dbReference type="InterPro" id="IPR014729">
    <property type="entry name" value="Rossmann-like_a/b/a_fold"/>
</dbReference>
<dbReference type="InterPro" id="IPR032678">
    <property type="entry name" value="tRNA-synt_1_cat_dom"/>
</dbReference>
<dbReference type="InterPro" id="IPR009080">
    <property type="entry name" value="tRNAsynth_Ia_anticodon-bd"/>
</dbReference>
<dbReference type="NCBIfam" id="TIGR00435">
    <property type="entry name" value="cysS"/>
    <property type="match status" value="1"/>
</dbReference>
<dbReference type="PANTHER" id="PTHR10890:SF3">
    <property type="entry name" value="CYSTEINE--TRNA LIGASE, CYTOPLASMIC"/>
    <property type="match status" value="1"/>
</dbReference>
<dbReference type="PANTHER" id="PTHR10890">
    <property type="entry name" value="CYSTEINYL-TRNA SYNTHETASE"/>
    <property type="match status" value="1"/>
</dbReference>
<dbReference type="Pfam" id="PF09190">
    <property type="entry name" value="DALR_2"/>
    <property type="match status" value="1"/>
</dbReference>
<dbReference type="Pfam" id="PF01406">
    <property type="entry name" value="tRNA-synt_1e"/>
    <property type="match status" value="1"/>
</dbReference>
<dbReference type="PRINTS" id="PR00983">
    <property type="entry name" value="TRNASYNTHCYS"/>
</dbReference>
<dbReference type="SMART" id="SM00840">
    <property type="entry name" value="DALR_2"/>
    <property type="match status" value="1"/>
</dbReference>
<dbReference type="SUPFAM" id="SSF47323">
    <property type="entry name" value="Anticodon-binding domain of a subclass of class I aminoacyl-tRNA synthetases"/>
    <property type="match status" value="1"/>
</dbReference>
<dbReference type="SUPFAM" id="SSF52374">
    <property type="entry name" value="Nucleotidylyl transferase"/>
    <property type="match status" value="1"/>
</dbReference>
<sequence>MRFYNTLSKHIEEFKENEPGIVRMYVCGPTVYGLIHIGNARPMVVFDALRRYLEYRGYRVIMVQNFTDIDDKIINKSIEFSVDFKDISETFIAEYWRDSMALGVRAPNFSPKTSDFVPEIINAIQNLIAKNHAYVVDGDVYFSVRSFPRYGELSHRSIDELKAGARIDLNEKKRDPLDFALWKSAKPGEPYWKSPWGNGRPGWHIECSVMSTKLLGTTLDIHAGGEDLIFPHHENEKAQSEALTGKTFVKYWLHNGMIKYTGDKMSKSTGNIFLLREALKKYGADALKIFFLSKHYRSPIEFSEKALSSAAKAATRINETFLRFESEFSFAIPKQDSWINEKRSIFIDSLDDDFNTPRALALIFELVNSLNRAMDDGNERDALKIYHLLRREFCPVLGLFDLPERADNRSIEELVKILIDVRAELRAKKQYELSDMIRSKLRKVGIELKDMPQGTTYTFIKEV</sequence>